<organism>
    <name type="scientific">Solanum tuberosum</name>
    <name type="common">Potato</name>
    <dbReference type="NCBI Taxonomy" id="4113"/>
    <lineage>
        <taxon>Eukaryota</taxon>
        <taxon>Viridiplantae</taxon>
        <taxon>Streptophyta</taxon>
        <taxon>Embryophyta</taxon>
        <taxon>Tracheophyta</taxon>
        <taxon>Spermatophyta</taxon>
        <taxon>Magnoliopsida</taxon>
        <taxon>eudicotyledons</taxon>
        <taxon>Gunneridae</taxon>
        <taxon>Pentapetalae</taxon>
        <taxon>asterids</taxon>
        <taxon>lamiids</taxon>
        <taxon>Solanales</taxon>
        <taxon>Solanaceae</taxon>
        <taxon>Solanoideae</taxon>
        <taxon>Solaneae</taxon>
        <taxon>Solanum</taxon>
    </lineage>
</organism>
<protein>
    <recommendedName>
        <fullName>Respiratory burst oxidase homolog protein A</fullName>
        <ecNumber>1.11.1.-</ecNumber>
        <ecNumber>1.6.3.-</ecNumber>
    </recommendedName>
    <alternativeName>
        <fullName>NADPH oxidase RBOHA</fullName>
    </alternativeName>
    <alternativeName>
        <fullName>StRBOHA</fullName>
    </alternativeName>
</protein>
<keyword id="KW-0106">Calcium</keyword>
<keyword id="KW-1003">Cell membrane</keyword>
<keyword id="KW-0274">FAD</keyword>
<keyword id="KW-0285">Flavoprotein</keyword>
<keyword id="KW-0472">Membrane</keyword>
<keyword id="KW-0479">Metal-binding</keyword>
<keyword id="KW-0521">NADP</keyword>
<keyword id="KW-0560">Oxidoreductase</keyword>
<keyword id="KW-0575">Peroxidase</keyword>
<keyword id="KW-0597">Phosphoprotein</keyword>
<keyword id="KW-1185">Reference proteome</keyword>
<keyword id="KW-0812">Transmembrane</keyword>
<keyword id="KW-1133">Transmembrane helix</keyword>
<sequence>MRGLPGHERRWTSDTVSSGKDLSGESSPGTDSGNISGFASEEFVEVILDLQDDDTIILRSVEPATVINIDASDPATGVGIGGVSIETPASLTSTSGTRSPTMRRSTSNKLRQFSQELKAEAVAKAKHFSQELKAELRRFSWSHGHASRTFSPASFFQNAVVGTGNGVDSALAARALRRQRAQLDRTRSSAHKALRGLKFISNNKTNGWNEVENNFAKLAKDGYLYRSDFAQCIGMKDSKEFALELFDALSRRRRLKVDKISKEELYEYWSQITDQSFDSRLQIFFDMVDKNEDGRIGEEEVKEIIMLSASANKLSRLKEQAEEYAALIMEELDPERLGYIELWQLETLLLQKDTYLNYSQALSYTSQALSQNLQGLRKRSPIRRMSTKLVYSLQENWKRIWVLVLWILIMIGLFLWKFYLYKQKSAFQVMGYCLLTAKGAAETLKFNMALILLPVCRNTITFLRSTKLSCFVPFDDNINFHKTVAAAIVTGIILHAGNHLVCDFPKLIHANNTNYQKYLVNDFGPSQPQYIDLVKGVEGVTGIIMVILMAIAFTLATRWFRRSLIKFPKPFDRLTGFNAFWYSHHLLIIVYIVLIIHGTFLYLVHNWYSKTTWMYLAVPVLLYAGERTLRFFRSGLYTVRLLKVAIYPGNVLTLQMSKPPQFRYKSGQYMFVQCPAVSPFEWHPFSITSAPGDDYLSIHIRQLGDWTQELKRVFSEACEQPEAGKSGLLRADENTKTSLPKLLIDGPYGAPAQDYRKYDVLLLVGLGIGATPFISILKDLLKNIVTMEEQADLVSDFSGNSDMSAATSEQPALNKISPKKRKSTLKTTNAYFYWVTREQGSFDWFKGVMNEVAELDQRGVIEMHNYLTSVYEEGDARSALITMVQALNHAKNGVDIVSGTSVRTHFARPNWRKVFSKTLTKHANARIGVFYCGAPILAKELSKLCKEFNQKGTTKFEFHKEHF</sequence>
<dbReference type="EC" id="1.11.1.-"/>
<dbReference type="EC" id="1.6.3.-"/>
<dbReference type="EMBL" id="AB050660">
    <property type="protein sequence ID" value="BAB70750.1"/>
    <property type="molecule type" value="mRNA"/>
</dbReference>
<dbReference type="RefSeq" id="NP_001275304.1">
    <property type="nucleotide sequence ID" value="NM_001288375.1"/>
</dbReference>
<dbReference type="SMR" id="Q948U0"/>
<dbReference type="FunCoup" id="Q948U0">
    <property type="interactions" value="462"/>
</dbReference>
<dbReference type="STRING" id="4113.Q948U0"/>
<dbReference type="PeroxiBase" id="4549">
    <property type="entry name" value="StRboh01"/>
</dbReference>
<dbReference type="PaxDb" id="4113-PGSC0003DMT400032088"/>
<dbReference type="GeneID" id="102579392"/>
<dbReference type="KEGG" id="sot:102579392"/>
<dbReference type="eggNOG" id="KOG0039">
    <property type="taxonomic scope" value="Eukaryota"/>
</dbReference>
<dbReference type="InParanoid" id="Q948U0"/>
<dbReference type="OrthoDB" id="167398at2759"/>
<dbReference type="Proteomes" id="UP000011115">
    <property type="component" value="Unassembled WGS sequence"/>
</dbReference>
<dbReference type="ExpressionAtlas" id="Q948U0">
    <property type="expression patterns" value="baseline"/>
</dbReference>
<dbReference type="GO" id="GO:0005886">
    <property type="term" value="C:plasma membrane"/>
    <property type="evidence" value="ECO:0000314"/>
    <property type="project" value="CACAO"/>
</dbReference>
<dbReference type="GO" id="GO:0005509">
    <property type="term" value="F:calcium ion binding"/>
    <property type="evidence" value="ECO:0007669"/>
    <property type="project" value="InterPro"/>
</dbReference>
<dbReference type="GO" id="GO:0016174">
    <property type="term" value="F:NAD(P)H oxidase H2O2-forming activity"/>
    <property type="evidence" value="ECO:0000318"/>
    <property type="project" value="GO_Central"/>
</dbReference>
<dbReference type="GO" id="GO:0004601">
    <property type="term" value="F:peroxidase activity"/>
    <property type="evidence" value="ECO:0007669"/>
    <property type="project" value="UniProtKB-KW"/>
</dbReference>
<dbReference type="CDD" id="cd00051">
    <property type="entry name" value="EFh"/>
    <property type="match status" value="1"/>
</dbReference>
<dbReference type="CDD" id="cd06186">
    <property type="entry name" value="NOX_Duox_like_FAD_NADP"/>
    <property type="match status" value="1"/>
</dbReference>
<dbReference type="FunFam" id="1.10.238.10:FF:000049">
    <property type="entry name" value="Respiratory burst oxidase homolog A"/>
    <property type="match status" value="1"/>
</dbReference>
<dbReference type="FunFam" id="2.40.30.10:FF:000019">
    <property type="entry name" value="Respiratory burst oxidase homolog A"/>
    <property type="match status" value="1"/>
</dbReference>
<dbReference type="FunFam" id="3.40.50.80:FF:000007">
    <property type="entry name" value="Respiratory burst oxidase protein A"/>
    <property type="match status" value="1"/>
</dbReference>
<dbReference type="Gene3D" id="1.10.238.10">
    <property type="entry name" value="EF-hand"/>
    <property type="match status" value="1"/>
</dbReference>
<dbReference type="Gene3D" id="3.40.50.80">
    <property type="entry name" value="Nucleotide-binding domain of ferredoxin-NADP reductase (FNR) module"/>
    <property type="match status" value="1"/>
</dbReference>
<dbReference type="Gene3D" id="2.40.30.10">
    <property type="entry name" value="Translation factors"/>
    <property type="match status" value="1"/>
</dbReference>
<dbReference type="InterPro" id="IPR000778">
    <property type="entry name" value="Cyt_b245_heavy_chain"/>
</dbReference>
<dbReference type="InterPro" id="IPR011992">
    <property type="entry name" value="EF-hand-dom_pair"/>
</dbReference>
<dbReference type="InterPro" id="IPR018247">
    <property type="entry name" value="EF_Hand_1_Ca_BS"/>
</dbReference>
<dbReference type="InterPro" id="IPR002048">
    <property type="entry name" value="EF_hand_dom"/>
</dbReference>
<dbReference type="InterPro" id="IPR013112">
    <property type="entry name" value="FAD-bd_8"/>
</dbReference>
<dbReference type="InterPro" id="IPR017927">
    <property type="entry name" value="FAD-bd_FR_type"/>
</dbReference>
<dbReference type="InterPro" id="IPR013130">
    <property type="entry name" value="Fe3_Rdtase_TM_dom"/>
</dbReference>
<dbReference type="InterPro" id="IPR013121">
    <property type="entry name" value="Fe_red_NAD-bd_6"/>
</dbReference>
<dbReference type="InterPro" id="IPR039261">
    <property type="entry name" value="FNR_nucleotide-bd"/>
</dbReference>
<dbReference type="InterPro" id="IPR013623">
    <property type="entry name" value="NADPH_Ox"/>
</dbReference>
<dbReference type="InterPro" id="IPR050369">
    <property type="entry name" value="RBOH/FRE"/>
</dbReference>
<dbReference type="InterPro" id="IPR017938">
    <property type="entry name" value="Riboflavin_synthase-like_b-brl"/>
</dbReference>
<dbReference type="PANTHER" id="PTHR11972">
    <property type="entry name" value="NADPH OXIDASE"/>
    <property type="match status" value="1"/>
</dbReference>
<dbReference type="PANTHER" id="PTHR11972:SF153">
    <property type="entry name" value="SUPEROXIDE-GENERATING NADPH OXIDASE HEAVY CHAIN SUBUNIT A"/>
    <property type="match status" value="1"/>
</dbReference>
<dbReference type="Pfam" id="PF08022">
    <property type="entry name" value="FAD_binding_8"/>
    <property type="match status" value="1"/>
</dbReference>
<dbReference type="Pfam" id="PF01794">
    <property type="entry name" value="Ferric_reduct"/>
    <property type="match status" value="1"/>
</dbReference>
<dbReference type="Pfam" id="PF08030">
    <property type="entry name" value="NAD_binding_6"/>
    <property type="match status" value="1"/>
</dbReference>
<dbReference type="Pfam" id="PF08414">
    <property type="entry name" value="NADPH_Ox"/>
    <property type="match status" value="1"/>
</dbReference>
<dbReference type="PRINTS" id="PR00466">
    <property type="entry name" value="GP91PHOX"/>
</dbReference>
<dbReference type="SFLD" id="SFLDS00052">
    <property type="entry name" value="Ferric_Reductase_Domain"/>
    <property type="match status" value="1"/>
</dbReference>
<dbReference type="SFLD" id="SFLDG01168">
    <property type="entry name" value="Ferric_reductase_subgroup_(FRE"/>
    <property type="match status" value="1"/>
</dbReference>
<dbReference type="SFLD" id="SFLDG01169">
    <property type="entry name" value="NADPH_oxidase_subgroup_(NOX)"/>
    <property type="match status" value="1"/>
</dbReference>
<dbReference type="SUPFAM" id="SSF47473">
    <property type="entry name" value="EF-hand"/>
    <property type="match status" value="1"/>
</dbReference>
<dbReference type="SUPFAM" id="SSF52343">
    <property type="entry name" value="Ferredoxin reductase-like, C-terminal NADP-linked domain"/>
    <property type="match status" value="1"/>
</dbReference>
<dbReference type="SUPFAM" id="SSF63380">
    <property type="entry name" value="Riboflavin synthase domain-like"/>
    <property type="match status" value="1"/>
</dbReference>
<dbReference type="PROSITE" id="PS00018">
    <property type="entry name" value="EF_HAND_1"/>
    <property type="match status" value="1"/>
</dbReference>
<dbReference type="PROSITE" id="PS50222">
    <property type="entry name" value="EF_HAND_2"/>
    <property type="match status" value="1"/>
</dbReference>
<dbReference type="PROSITE" id="PS51384">
    <property type="entry name" value="FAD_FR"/>
    <property type="match status" value="1"/>
</dbReference>
<accession>Q948U0</accession>
<evidence type="ECO:0000250" key="1"/>
<evidence type="ECO:0000255" key="2"/>
<evidence type="ECO:0000255" key="3">
    <source>
        <dbReference type="PROSITE-ProRule" id="PRU00448"/>
    </source>
</evidence>
<evidence type="ECO:0000255" key="4">
    <source>
        <dbReference type="PROSITE-ProRule" id="PRU00716"/>
    </source>
</evidence>
<evidence type="ECO:0000256" key="5">
    <source>
        <dbReference type="SAM" id="MobiDB-lite"/>
    </source>
</evidence>
<evidence type="ECO:0000269" key="6">
    <source>
    </source>
</evidence>
<evidence type="ECO:0000269" key="7">
    <source>
    </source>
</evidence>
<evidence type="ECO:0000269" key="8">
    <source>
    </source>
</evidence>
<evidence type="ECO:0000305" key="9"/>
<proteinExistence type="evidence at protein level"/>
<reference key="1">
    <citation type="journal article" date="2001" name="Mol. Plant Microbe Interact.">
        <title>Induction of plant gp91 phox homolog by fungal cell wall, arachidonic acid, and salicylic acid in potato.</title>
        <authorList>
            <person name="Yoshioka H."/>
            <person name="Sugie K."/>
            <person name="Park H.-J."/>
            <person name="Maeda H."/>
            <person name="Tsuda N."/>
            <person name="Kawakita K."/>
            <person name="Doke N."/>
        </authorList>
    </citation>
    <scope>NUCLEOTIDE SEQUENCE [MRNA]</scope>
    <scope>FUNCTION</scope>
    <source>
        <strain>cv. Rishiri</strain>
    </source>
</reference>
<reference key="2">
    <citation type="journal article" date="2006" name="J. Exp. Bot.">
        <title>Subcellular localization of Strboh proteins and NADPH-dependent O2(-)-generating activity in potato tuber tissues.</title>
        <authorList>
            <person name="Kobayashi M."/>
            <person name="Kawakita K."/>
            <person name="Maeshima M."/>
            <person name="Doke N."/>
            <person name="Yoshioka H."/>
        </authorList>
    </citation>
    <scope>SUBCELLULAR LOCATION</scope>
    <scope>INDUCTION</scope>
    <source>
        <strain>cv. Rishiri</strain>
    </source>
</reference>
<reference key="3">
    <citation type="journal article" date="2007" name="Plant Cell">
        <title>Calcium-dependent protein kinases regulate the production of reactive oxygen species by potato NADPH oxidase.</title>
        <authorList>
            <person name="Kobayashi M."/>
            <person name="Ohura I."/>
            <person name="Kawakita K."/>
            <person name="Yokota N."/>
            <person name="Fujiwara M."/>
            <person name="Shimamoto K."/>
            <person name="Doke N."/>
            <person name="Yoshioka H."/>
        </authorList>
    </citation>
    <scope>PHOSPHORYLATION</scope>
</reference>
<feature type="chain" id="PRO_0000313763" description="Respiratory burst oxidase homolog protein A">
    <location>
        <begin position="1"/>
        <end position="963"/>
    </location>
</feature>
<feature type="topological domain" description="Cytoplasmic" evidence="2">
    <location>
        <begin position="1"/>
        <end position="399"/>
    </location>
</feature>
<feature type="transmembrane region" description="Helical; Name=1" evidence="2">
    <location>
        <begin position="400"/>
        <end position="420"/>
    </location>
</feature>
<feature type="topological domain" description="Extracellular" evidence="2">
    <location>
        <begin position="421"/>
        <end position="435"/>
    </location>
</feature>
<feature type="transmembrane region" description="Helical; Name=2" evidence="1">
    <location>
        <begin position="436"/>
        <end position="456"/>
    </location>
</feature>
<feature type="topological domain" description="Cytoplasmic" evidence="2">
    <location>
        <begin position="457"/>
        <end position="482"/>
    </location>
</feature>
<feature type="transmembrane region" description="Helical; Name=3" evidence="1">
    <location>
        <begin position="483"/>
        <end position="503"/>
    </location>
</feature>
<feature type="topological domain" description="Extracellular" evidence="2">
    <location>
        <begin position="504"/>
        <end position="535"/>
    </location>
</feature>
<feature type="transmembrane region" description="Helical; Name=4" evidence="2">
    <location>
        <begin position="536"/>
        <end position="556"/>
    </location>
</feature>
<feature type="topological domain" description="Cytoplasmic" evidence="2">
    <location>
        <begin position="557"/>
        <end position="583"/>
    </location>
</feature>
<feature type="transmembrane region" description="Helical; Name=5" evidence="2">
    <location>
        <begin position="584"/>
        <end position="604"/>
    </location>
</feature>
<feature type="topological domain" description="Extracellular" evidence="2">
    <location>
        <begin position="605"/>
        <end position="759"/>
    </location>
</feature>
<feature type="transmembrane region" description="Helical; Name=6" evidence="2">
    <location>
        <begin position="760"/>
        <end position="780"/>
    </location>
</feature>
<feature type="topological domain" description="Cytoplasmic" evidence="2">
    <location>
        <begin position="781"/>
        <end position="963"/>
    </location>
</feature>
<feature type="domain" description="EF-hand" evidence="3">
    <location>
        <begin position="276"/>
        <end position="311"/>
    </location>
</feature>
<feature type="domain" description="Ferric oxidoreductase">
    <location>
        <begin position="438"/>
        <end position="595"/>
    </location>
</feature>
<feature type="domain" description="FAD-binding FR-type" evidence="4">
    <location>
        <begin position="634"/>
        <end position="754"/>
    </location>
</feature>
<feature type="region of interest" description="Disordered" evidence="5">
    <location>
        <begin position="1"/>
        <end position="36"/>
    </location>
</feature>
<feature type="region of interest" description="EF-hand-like 1" evidence="1">
    <location>
        <begin position="219"/>
        <end position="227"/>
    </location>
</feature>
<feature type="region of interest" description="EF-hand-like 2" evidence="1">
    <location>
        <begin position="253"/>
        <end position="264"/>
    </location>
</feature>
<feature type="compositionally biased region" description="Basic and acidic residues" evidence="5">
    <location>
        <begin position="1"/>
        <end position="12"/>
    </location>
</feature>
<feature type="compositionally biased region" description="Polar residues" evidence="5">
    <location>
        <begin position="13"/>
        <end position="36"/>
    </location>
</feature>
<feature type="binding site" evidence="3">
    <location>
        <position position="289"/>
    </location>
    <ligand>
        <name>Ca(2+)</name>
        <dbReference type="ChEBI" id="CHEBI:29108"/>
    </ligand>
</feature>
<feature type="binding site" evidence="3">
    <location>
        <position position="291"/>
    </location>
    <ligand>
        <name>Ca(2+)</name>
        <dbReference type="ChEBI" id="CHEBI:29108"/>
    </ligand>
</feature>
<feature type="binding site" evidence="3">
    <location>
        <position position="293"/>
    </location>
    <ligand>
        <name>Ca(2+)</name>
        <dbReference type="ChEBI" id="CHEBI:29108"/>
    </ligand>
</feature>
<feature type="binding site" evidence="3">
    <location>
        <position position="295"/>
    </location>
    <ligand>
        <name>Ca(2+)</name>
        <dbReference type="ChEBI" id="CHEBI:29108"/>
    </ligand>
</feature>
<feature type="binding site" evidence="3">
    <location>
        <position position="300"/>
    </location>
    <ligand>
        <name>Ca(2+)</name>
        <dbReference type="ChEBI" id="CHEBI:29108"/>
    </ligand>
</feature>
<name>RBOHA_SOLTU</name>
<gene>
    <name type="primary">RBOHA</name>
</gene>
<comment type="function">
    <text evidence="6">Calcium-dependent NADPH oxidase that generates superoxide. Involved in the rapid and transient phase I oxidative burst induced by pathogen infection.</text>
</comment>
<comment type="subunit">
    <text evidence="1">Monomer and homodimer.</text>
</comment>
<comment type="subcellular location">
    <subcellularLocation>
        <location evidence="7">Cell membrane</location>
        <topology evidence="7">Multi-pass membrane protein</topology>
    </subcellularLocation>
</comment>
<comment type="induction">
    <text evidence="7">Expressed constitutively. Not induced by fungal elicitor.</text>
</comment>
<comment type="PTM">
    <text evidence="8">Phosphorylated by CPK.</text>
</comment>
<comment type="similarity">
    <text evidence="9">Belongs to the RBOH (TC 5.B.1.3) family.</text>
</comment>